<gene>
    <name evidence="1" type="primary">dut</name>
    <name type="ordered locus">A1C_02980</name>
</gene>
<feature type="chain" id="PRO_1000015506" description="Deoxyuridine 5'-triphosphate nucleotidohydrolase">
    <location>
        <begin position="1"/>
        <end position="148"/>
    </location>
</feature>
<feature type="binding site" evidence="1">
    <location>
        <begin position="68"/>
        <end position="70"/>
    </location>
    <ligand>
        <name>substrate</name>
    </ligand>
</feature>
<feature type="binding site" evidence="1">
    <location>
        <position position="81"/>
    </location>
    <ligand>
        <name>substrate</name>
    </ligand>
</feature>
<feature type="binding site" evidence="1">
    <location>
        <begin position="85"/>
        <end position="87"/>
    </location>
    <ligand>
        <name>substrate</name>
    </ligand>
</feature>
<feature type="binding site" evidence="1">
    <location>
        <position position="95"/>
    </location>
    <ligand>
        <name>substrate</name>
    </ligand>
</feature>
<sequence length="148" mass="16032">MNITQVKIKKLENFSGSLPEYATEHSAGMDLIAANEQPITIKAGEIQLIPTGIAIALPYSFEAQIRPRSGLAVKHGITVANSPGTIDADYRGEIKVILINLGTQDFVIEKGMRIAQIIISKYERILWEESSILTETMRGSGGFGSTGV</sequence>
<evidence type="ECO:0000255" key="1">
    <source>
        <dbReference type="HAMAP-Rule" id="MF_00116"/>
    </source>
</evidence>
<name>DUT_RICAH</name>
<protein>
    <recommendedName>
        <fullName evidence="1">Deoxyuridine 5'-triphosphate nucleotidohydrolase</fullName>
        <shortName evidence="1">dUTPase</shortName>
        <ecNumber evidence="1">3.6.1.23</ecNumber>
    </recommendedName>
    <alternativeName>
        <fullName evidence="1">dUTP pyrophosphatase</fullName>
    </alternativeName>
</protein>
<keyword id="KW-0378">Hydrolase</keyword>
<keyword id="KW-0460">Magnesium</keyword>
<keyword id="KW-0479">Metal-binding</keyword>
<keyword id="KW-0546">Nucleotide metabolism</keyword>
<comment type="function">
    <text evidence="1">This enzyme is involved in nucleotide metabolism: it produces dUMP, the immediate precursor of thymidine nucleotides and it decreases the intracellular concentration of dUTP so that uracil cannot be incorporated into DNA.</text>
</comment>
<comment type="catalytic activity">
    <reaction evidence="1">
        <text>dUTP + H2O = dUMP + diphosphate + H(+)</text>
        <dbReference type="Rhea" id="RHEA:10248"/>
        <dbReference type="ChEBI" id="CHEBI:15377"/>
        <dbReference type="ChEBI" id="CHEBI:15378"/>
        <dbReference type="ChEBI" id="CHEBI:33019"/>
        <dbReference type="ChEBI" id="CHEBI:61555"/>
        <dbReference type="ChEBI" id="CHEBI:246422"/>
        <dbReference type="EC" id="3.6.1.23"/>
    </reaction>
</comment>
<comment type="cofactor">
    <cofactor evidence="1">
        <name>Mg(2+)</name>
        <dbReference type="ChEBI" id="CHEBI:18420"/>
    </cofactor>
</comment>
<comment type="pathway">
    <text evidence="1">Pyrimidine metabolism; dUMP biosynthesis; dUMP from dCTP (dUTP route): step 2/2.</text>
</comment>
<comment type="similarity">
    <text evidence="1">Belongs to the dUTPase family.</text>
</comment>
<organism>
    <name type="scientific">Rickettsia akari (strain Hartford)</name>
    <dbReference type="NCBI Taxonomy" id="293614"/>
    <lineage>
        <taxon>Bacteria</taxon>
        <taxon>Pseudomonadati</taxon>
        <taxon>Pseudomonadota</taxon>
        <taxon>Alphaproteobacteria</taxon>
        <taxon>Rickettsiales</taxon>
        <taxon>Rickettsiaceae</taxon>
        <taxon>Rickettsieae</taxon>
        <taxon>Rickettsia</taxon>
        <taxon>spotted fever group</taxon>
    </lineage>
</organism>
<proteinExistence type="inferred from homology"/>
<reference key="1">
    <citation type="submission" date="2007-09" db="EMBL/GenBank/DDBJ databases">
        <title>Complete genome sequence of Rickettsia akari.</title>
        <authorList>
            <person name="Madan A."/>
            <person name="Fahey J."/>
            <person name="Helton E."/>
            <person name="Ketteman M."/>
            <person name="Madan A."/>
            <person name="Rodrigues S."/>
            <person name="Sanchez A."/>
            <person name="Whiting M."/>
            <person name="Dasch G."/>
            <person name="Eremeeva M."/>
        </authorList>
    </citation>
    <scope>NUCLEOTIDE SEQUENCE [LARGE SCALE GENOMIC DNA]</scope>
    <source>
        <strain>Hartford</strain>
    </source>
</reference>
<accession>A8GNB1</accession>
<dbReference type="EC" id="3.6.1.23" evidence="1"/>
<dbReference type="EMBL" id="CP000847">
    <property type="protein sequence ID" value="ABV74886.1"/>
    <property type="molecule type" value="Genomic_DNA"/>
</dbReference>
<dbReference type="RefSeq" id="WP_012149519.1">
    <property type="nucleotide sequence ID" value="NC_009881.1"/>
</dbReference>
<dbReference type="SMR" id="A8GNB1"/>
<dbReference type="STRING" id="293614.A1C_02980"/>
<dbReference type="KEGG" id="rak:A1C_02980"/>
<dbReference type="eggNOG" id="COG0756">
    <property type="taxonomic scope" value="Bacteria"/>
</dbReference>
<dbReference type="HOGENOM" id="CLU_068508_1_2_5"/>
<dbReference type="UniPathway" id="UPA00610">
    <property type="reaction ID" value="UER00666"/>
</dbReference>
<dbReference type="Proteomes" id="UP000006830">
    <property type="component" value="Chromosome"/>
</dbReference>
<dbReference type="GO" id="GO:0004170">
    <property type="term" value="F:dUTP diphosphatase activity"/>
    <property type="evidence" value="ECO:0007669"/>
    <property type="project" value="UniProtKB-UniRule"/>
</dbReference>
<dbReference type="GO" id="GO:0000287">
    <property type="term" value="F:magnesium ion binding"/>
    <property type="evidence" value="ECO:0007669"/>
    <property type="project" value="UniProtKB-UniRule"/>
</dbReference>
<dbReference type="GO" id="GO:0006226">
    <property type="term" value="P:dUMP biosynthetic process"/>
    <property type="evidence" value="ECO:0007669"/>
    <property type="project" value="UniProtKB-UniRule"/>
</dbReference>
<dbReference type="GO" id="GO:0046081">
    <property type="term" value="P:dUTP catabolic process"/>
    <property type="evidence" value="ECO:0007669"/>
    <property type="project" value="InterPro"/>
</dbReference>
<dbReference type="CDD" id="cd07557">
    <property type="entry name" value="trimeric_dUTPase"/>
    <property type="match status" value="1"/>
</dbReference>
<dbReference type="FunFam" id="2.70.40.10:FF:000002">
    <property type="entry name" value="dUTP diphosphatase"/>
    <property type="match status" value="1"/>
</dbReference>
<dbReference type="Gene3D" id="2.70.40.10">
    <property type="match status" value="1"/>
</dbReference>
<dbReference type="HAMAP" id="MF_00116">
    <property type="entry name" value="dUTPase_bact"/>
    <property type="match status" value="1"/>
</dbReference>
<dbReference type="InterPro" id="IPR008181">
    <property type="entry name" value="dUTPase"/>
</dbReference>
<dbReference type="InterPro" id="IPR029054">
    <property type="entry name" value="dUTPase-like"/>
</dbReference>
<dbReference type="InterPro" id="IPR036157">
    <property type="entry name" value="dUTPase-like_sf"/>
</dbReference>
<dbReference type="InterPro" id="IPR033704">
    <property type="entry name" value="dUTPase_trimeric"/>
</dbReference>
<dbReference type="NCBIfam" id="TIGR00576">
    <property type="entry name" value="dut"/>
    <property type="match status" value="1"/>
</dbReference>
<dbReference type="NCBIfam" id="NF001862">
    <property type="entry name" value="PRK00601.1"/>
    <property type="match status" value="1"/>
</dbReference>
<dbReference type="PANTHER" id="PTHR11241">
    <property type="entry name" value="DEOXYURIDINE 5'-TRIPHOSPHATE NUCLEOTIDOHYDROLASE"/>
    <property type="match status" value="1"/>
</dbReference>
<dbReference type="PANTHER" id="PTHR11241:SF0">
    <property type="entry name" value="DEOXYURIDINE 5'-TRIPHOSPHATE NUCLEOTIDOHYDROLASE"/>
    <property type="match status" value="1"/>
</dbReference>
<dbReference type="Pfam" id="PF00692">
    <property type="entry name" value="dUTPase"/>
    <property type="match status" value="1"/>
</dbReference>
<dbReference type="SUPFAM" id="SSF51283">
    <property type="entry name" value="dUTPase-like"/>
    <property type="match status" value="1"/>
</dbReference>